<organism>
    <name type="scientific">Saprolegnia parasitica (strain CBS 223.65)</name>
    <dbReference type="NCBI Taxonomy" id="695850"/>
    <lineage>
        <taxon>Eukaryota</taxon>
        <taxon>Sar</taxon>
        <taxon>Stramenopiles</taxon>
        <taxon>Oomycota</taxon>
        <taxon>Saprolegniales</taxon>
        <taxon>Saprolegniaceae</taxon>
        <taxon>Saprolegnia</taxon>
    </lineage>
</organism>
<evidence type="ECO:0000250" key="1">
    <source>
        <dbReference type="UniProtKB" id="P00644"/>
    </source>
</evidence>
<evidence type="ECO:0000255" key="2"/>
<evidence type="ECO:0000255" key="3">
    <source>
        <dbReference type="PROSITE-ProRule" id="PRU00272"/>
    </source>
</evidence>
<evidence type="ECO:0000255" key="4">
    <source>
        <dbReference type="PROSITE-ProRule" id="PRU00498"/>
    </source>
</evidence>
<evidence type="ECO:0000269" key="5">
    <source>
    </source>
</evidence>
<evidence type="ECO:0000303" key="6">
    <source>
    </source>
</evidence>
<evidence type="ECO:0000305" key="7"/>
<evidence type="ECO:0000305" key="8">
    <source>
    </source>
</evidence>
<accession>A0A067CMC7</accession>
<protein>
    <recommendedName>
        <fullName evidence="6">Endonuclease Htp3</fullName>
        <ecNumber evidence="5">3.1.31.-</ecNumber>
    </recommendedName>
    <alternativeName>
        <fullName evidence="6">Host targeting protein 3</fullName>
    </alternativeName>
    <alternativeName>
        <fullName evidence="6">RxLR effector protein Htp3</fullName>
    </alternativeName>
</protein>
<name>HTP3_SAPPC</name>
<gene>
    <name type="primary">HTP3</name>
    <name type="ORF">SPRG_03573</name>
</gene>
<proteinExistence type="evidence at protein level"/>
<feature type="signal peptide" evidence="2">
    <location>
        <begin position="1"/>
        <end position="20"/>
    </location>
</feature>
<feature type="chain" id="PRO_0000446903" description="Endonuclease Htp3">
    <location>
        <begin position="21"/>
        <end position="211"/>
    </location>
</feature>
<feature type="domain" description="TNase-like" evidence="3">
    <location>
        <begin position="48"/>
        <end position="198"/>
    </location>
</feature>
<feature type="region of interest" description="Binding to the host cell surface" evidence="5">
    <location>
        <begin position="200"/>
        <end position="211"/>
    </location>
</feature>
<feature type="short sequence motif" description="RxLR" evidence="8">
    <location>
        <begin position="48"/>
        <end position="51"/>
    </location>
</feature>
<feature type="active site" evidence="3">
    <location>
        <position position="90"/>
    </location>
</feature>
<feature type="active site" evidence="3">
    <location>
        <position position="98"/>
    </location>
</feature>
<feature type="active site" evidence="3">
    <location>
        <position position="138"/>
    </location>
</feature>
<feature type="binding site" evidence="1">
    <location>
        <position position="77"/>
    </location>
    <ligand>
        <name>Ca(2+)</name>
        <dbReference type="ChEBI" id="CHEBI:29108"/>
    </ligand>
</feature>
<feature type="binding site" evidence="1">
    <location>
        <position position="95"/>
    </location>
    <ligand>
        <name>Ca(2+)</name>
        <dbReference type="ChEBI" id="CHEBI:29108"/>
    </ligand>
</feature>
<feature type="glycosylation site" description="N-linked (GlcNAc...) asparagine" evidence="4">
    <location>
        <position position="153"/>
    </location>
</feature>
<feature type="mutagenesis site" description="Impairs host cell surface association and translocation into the host cell; when associated with A-210." evidence="5">
    <original>K</original>
    <variation>A</variation>
    <location>
        <position position="208"/>
    </location>
</feature>
<feature type="mutagenesis site" description="Impairs host cell surface association and translocation into the host cell; when associated with A-208." evidence="5">
    <original>R</original>
    <variation>A</variation>
    <location>
        <position position="210"/>
    </location>
</feature>
<dbReference type="EC" id="3.1.31.-" evidence="5"/>
<dbReference type="EMBL" id="KK583197">
    <property type="protein sequence ID" value="KDO31653.1"/>
    <property type="molecule type" value="Genomic_DNA"/>
</dbReference>
<dbReference type="RefSeq" id="XP_012197543.1">
    <property type="nucleotide sequence ID" value="XM_012342153.1"/>
</dbReference>
<dbReference type="SMR" id="A0A067CMC7"/>
<dbReference type="STRING" id="695850.A0A067CMC7"/>
<dbReference type="GlyCosmos" id="A0A067CMC7">
    <property type="glycosylation" value="1 site, No reported glycans"/>
</dbReference>
<dbReference type="EnsemblProtists" id="KDO31653">
    <property type="protein sequence ID" value="KDO31653"/>
    <property type="gene ID" value="SPRG_03573"/>
</dbReference>
<dbReference type="GeneID" id="24126067"/>
<dbReference type="KEGG" id="spar:SPRG_03573"/>
<dbReference type="VEuPathDB" id="FungiDB:SPRG_03573"/>
<dbReference type="OMA" id="PWLANGD"/>
<dbReference type="OrthoDB" id="430293at2759"/>
<dbReference type="Proteomes" id="UP000030745">
    <property type="component" value="Unassembled WGS sequence"/>
</dbReference>
<dbReference type="GO" id="GO:0005737">
    <property type="term" value="C:cytoplasm"/>
    <property type="evidence" value="ECO:0007669"/>
    <property type="project" value="TreeGrafter"/>
</dbReference>
<dbReference type="GO" id="GO:0005576">
    <property type="term" value="C:extracellular region"/>
    <property type="evidence" value="ECO:0007669"/>
    <property type="project" value="UniProtKB-SubCell"/>
</dbReference>
<dbReference type="GO" id="GO:0044164">
    <property type="term" value="C:host cell cytosol"/>
    <property type="evidence" value="ECO:0007669"/>
    <property type="project" value="UniProtKB-SubCell"/>
</dbReference>
<dbReference type="GO" id="GO:0004519">
    <property type="term" value="F:endonuclease activity"/>
    <property type="evidence" value="ECO:0007669"/>
    <property type="project" value="UniProtKB-KW"/>
</dbReference>
<dbReference type="GO" id="GO:0046872">
    <property type="term" value="F:metal ion binding"/>
    <property type="evidence" value="ECO:0007669"/>
    <property type="project" value="UniProtKB-KW"/>
</dbReference>
<dbReference type="Gene3D" id="2.40.50.90">
    <property type="match status" value="1"/>
</dbReference>
<dbReference type="InterPro" id="IPR035437">
    <property type="entry name" value="SNase_OB-fold_sf"/>
</dbReference>
<dbReference type="InterPro" id="IPR016071">
    <property type="entry name" value="Staphylococal_nuclease_OB-fold"/>
</dbReference>
<dbReference type="PANTHER" id="PTHR12302">
    <property type="entry name" value="EBNA2 BINDING PROTEIN P100"/>
    <property type="match status" value="1"/>
</dbReference>
<dbReference type="PANTHER" id="PTHR12302:SF3">
    <property type="entry name" value="SERINE_THREONINE-PROTEIN KINASE 31"/>
    <property type="match status" value="1"/>
</dbReference>
<dbReference type="Pfam" id="PF00565">
    <property type="entry name" value="SNase"/>
    <property type="match status" value="1"/>
</dbReference>
<dbReference type="SMART" id="SM00318">
    <property type="entry name" value="SNc"/>
    <property type="match status" value="1"/>
</dbReference>
<dbReference type="SUPFAM" id="SSF50199">
    <property type="entry name" value="Staphylococcal nuclease"/>
    <property type="match status" value="1"/>
</dbReference>
<dbReference type="PROSITE" id="PS50830">
    <property type="entry name" value="TNASE_3"/>
    <property type="match status" value="1"/>
</dbReference>
<keyword id="KW-0106">Calcium</keyword>
<keyword id="KW-0255">Endonuclease</keyword>
<keyword id="KW-0325">Glycoprotein</keyword>
<keyword id="KW-1035">Host cytoplasm</keyword>
<keyword id="KW-0378">Hydrolase</keyword>
<keyword id="KW-0479">Metal-binding</keyword>
<keyword id="KW-0540">Nuclease</keyword>
<keyword id="KW-1185">Reference proteome</keyword>
<keyword id="KW-0964">Secreted</keyword>
<keyword id="KW-0732">Signal</keyword>
<keyword id="KW-0843">Virulence</keyword>
<sequence>MLEVPVWIPILAFAVGLGLGLLIPHLQKPFQRFSTVNDIPKEFFEHERTLRGKVVSVTDGDTIRVRHVPWLANGDGDFKGKLTETTLQLRVAGVDCPETAKFGRTGQPFGEEAKAWLKGELQDQVVSFKLLMKDQYSRAVCLVYYGSWAAPMNVSEELLRHGYANIYRQSGAVYGGLLETFEALEAEAREKRVNIWSLDKRETPAQYKARK</sequence>
<reference key="1">
    <citation type="journal article" date="2013" name="PLoS Genet.">
        <title>Distinctive expansion of potential virulence genes in the genome of the oomycete fish pathogen Saprolegnia parasitica.</title>
        <authorList>
            <person name="Jiang R.H."/>
            <person name="de Bruijn I."/>
            <person name="Haas B.J."/>
            <person name="Belmonte R."/>
            <person name="Lobach L."/>
            <person name="Christie J."/>
            <person name="van den Ackerveken G."/>
            <person name="Bottin A."/>
            <person name="Bulone V."/>
            <person name="Diaz-Moreno S.M."/>
            <person name="Dumas B."/>
            <person name="Fan L."/>
            <person name="Gaulin E."/>
            <person name="Govers F."/>
            <person name="Grenville-Briggs L.J."/>
            <person name="Horner N.R."/>
            <person name="Levin J.Z."/>
            <person name="Mammella M."/>
            <person name="Meijer H.J."/>
            <person name="Morris P."/>
            <person name="Nusbaum C."/>
            <person name="Oome S."/>
            <person name="Phillips A.J."/>
            <person name="van Rooyen D."/>
            <person name="Rzeszutek E."/>
            <person name="Saraiva M."/>
            <person name="Secombes C.J."/>
            <person name="Seidl M.F."/>
            <person name="Snel B."/>
            <person name="Stassen J.H."/>
            <person name="Sykes S."/>
            <person name="Tripathy S."/>
            <person name="van den Berg H."/>
            <person name="Vega-Arreguin J.C."/>
            <person name="Wawra S."/>
            <person name="Young S.K."/>
            <person name="Zeng Q."/>
            <person name="Dieguez-Uribeondo J."/>
            <person name="Russ C."/>
            <person name="Tyler B.M."/>
            <person name="van West P."/>
        </authorList>
    </citation>
    <scope>NUCLEOTIDE SEQUENCE [LARGE SCALE GENOMIC DNA]</scope>
    <source>
        <strain>CBS 223.65</strain>
    </source>
</reference>
<reference key="2">
    <citation type="journal article" date="2018" name="Nat. Commun.">
        <title>Cell entry of a host-targeting protein of oomycetes requires gp96.</title>
        <authorList>
            <person name="Trusch F."/>
            <person name="Loebach L."/>
            <person name="Wawra S."/>
            <person name="Durward E."/>
            <person name="Wuensch A."/>
            <person name="Iberahim N.A."/>
            <person name="de Bruijn I."/>
            <person name="MacKenzie K."/>
            <person name="Willems A."/>
            <person name="Toloczko A."/>
            <person name="Dieguez-Uribeondo J."/>
            <person name="Rasmussen T."/>
            <person name="Schrader T."/>
            <person name="Bayer P."/>
            <person name="Secombes C.J."/>
            <person name="van West P."/>
        </authorList>
    </citation>
    <scope>FUNCTION</scope>
    <scope>CATALYTIC ACTIVITY</scope>
    <scope>ACTIVITY REGULATION</scope>
    <scope>SUBCELLULAR LOCATION</scope>
    <scope>INDUCTION</scope>
    <scope>INTERACTION WITH HTP1 AND HOST GP96</scope>
    <scope>DOMAIN</scope>
    <scope>MUTAGENESIS OF LYS-208 AND ARG-210</scope>
</reference>
<comment type="function">
    <text evidence="5">Effector involved in the disease saprolegniosis in salmonids and other freshwater fish, resulting in considerable economic losses in aquaculture (PubMed:29904064). Within the host fish cells, Htp3 is released from vesicles into host cytosol where it degrades nucleic acids (PubMed:29904064).</text>
</comment>
<comment type="activity regulation">
    <text evidence="5">The nuclease activity shows a general salt dependency with a clear reduction by magnesium and sulfate ions.</text>
</comment>
<comment type="subunit">
    <text evidence="5">Interacts with the host cell surface endoplasmin gp96, in order to get translocated into to host cell (PubMed:29904064). Interacts with the effector Htp1, in order to get released from vesicles into the host cytosol (PubMed:29904064).</text>
</comment>
<comment type="subcellular location">
    <subcellularLocation>
        <location evidence="5">Secreted</location>
    </subcellularLocation>
    <subcellularLocation>
        <location evidence="5">Host cytoplasm</location>
        <location evidence="5">Host cytosol</location>
    </subcellularLocation>
    <text evidence="5">Uptake into host cells is more efficient at a lower pH of 5.5. S.parasitica acidifies the pH of its environment, which likely leads to the exposure of a gp96 protein to the host cell surface. The gp96 protein is working as a receptor and mediates the translocation of Htp3 via lipid rafts into the cell. Finally, Htp3 is released from vesicles with the help of other effector proteins, such as Htp1, into the cytosol where it is functionally active as a nuclease.</text>
</comment>
<comment type="domain">
    <text evidence="5">The conserved RxLR motif does not seem to be involved in self-translocation into fish cells.</text>
</comment>
<comment type="domain">
    <text evidence="5">The C-terminus (residues 200 to 211) is predicted to form a short helix with charged amino acids and is required for the self-translocation into fish cells.</text>
</comment>
<comment type="similarity">
    <text evidence="7">In the N-terminal section; belongs to the RxLR effector family.</text>
</comment>
<comment type="similarity">
    <text evidence="7">In the C-terminal section; belongs to the LCL3 family.</text>
</comment>